<keyword id="KW-0539">Nucleus</keyword>
<keyword id="KW-1185">Reference proteome</keyword>
<keyword id="KW-0687">Ribonucleoprotein</keyword>
<keyword id="KW-0690">Ribosome biogenesis</keyword>
<keyword id="KW-0698">rRNA processing</keyword>
<feature type="chain" id="PRO_0000149012" description="H/ACA ribonucleoprotein complex subunit nop10">
    <location>
        <begin position="1"/>
        <end position="64"/>
    </location>
</feature>
<comment type="function">
    <text evidence="1">Non-catalytic component of the H/ACA small nucleolar ribonucleoprotein (H/ACA snoRNP), which catalyzes pseudouridylation of rRNA and is required for ribosome biogenesis. This involves the isomerization of uridine such that the ribose is subsequently attached to C5, instead of the normal N1. Pseudouridine ('psi') residues may serve to stabilize the conformation of rRNAs. The H/ACA snoRNP complex also mediates pseudouridylation of other types of RNAs. The H/ACA snoRNP complex mediates pseudouridylation at position 93 in U2 snRNA.</text>
</comment>
<comment type="subunit">
    <text evidence="1">Component of the small nucleolar ribonucleoprotein particles containing H/ACA-type snoRNAs (H/ACA snoRNPs).</text>
</comment>
<comment type="subcellular location">
    <subcellularLocation>
        <location evidence="1">Nucleus</location>
        <location evidence="1">Nucleolus</location>
    </subcellularLocation>
</comment>
<comment type="similarity">
    <text evidence="2">Belongs to the NOP10 family.</text>
</comment>
<sequence length="64" mass="7658">MHLMYYLNDEGKRVYTLKKVSPDGRVTKSSHPARFSPDDKYSRQRYTLKKRFHVLLTQLPAKPY</sequence>
<protein>
    <recommendedName>
        <fullName>H/ACA ribonucleoprotein complex subunit nop10</fullName>
    </recommendedName>
    <alternativeName>
        <fullName>Nucleolar protein 10</fullName>
    </alternativeName>
    <alternativeName>
        <fullName>Nucleolar protein family A member 3</fullName>
    </alternativeName>
    <alternativeName>
        <fullName>snoRNP protein nop10</fullName>
    </alternativeName>
</protein>
<accession>Q9P7M5</accession>
<dbReference type="EMBL" id="CU329670">
    <property type="protein sequence ID" value="CAB76034.1"/>
    <property type="molecule type" value="Genomic_DNA"/>
</dbReference>
<dbReference type="RefSeq" id="NP_593418.1">
    <property type="nucleotide sequence ID" value="NM_001018851.2"/>
</dbReference>
<dbReference type="SMR" id="Q9P7M5"/>
<dbReference type="BioGRID" id="279090">
    <property type="interactions" value="66"/>
</dbReference>
<dbReference type="FunCoup" id="Q9P7M5">
    <property type="interactions" value="478"/>
</dbReference>
<dbReference type="STRING" id="284812.Q9P7M5"/>
<dbReference type="iPTMnet" id="Q9P7M5"/>
<dbReference type="PaxDb" id="4896-SPAP27G11.13c.1"/>
<dbReference type="EnsemblFungi" id="SPAP27G11.13c.1">
    <property type="protein sequence ID" value="SPAP27G11.13c.1:pep"/>
    <property type="gene ID" value="SPAP27G11.13c"/>
</dbReference>
<dbReference type="GeneID" id="2542636"/>
<dbReference type="KEGG" id="spo:2542636"/>
<dbReference type="PomBase" id="SPAP27G11.13c">
    <property type="gene designation" value="nop10"/>
</dbReference>
<dbReference type="VEuPathDB" id="FungiDB:SPAP27G11.13c"/>
<dbReference type="eggNOG" id="KOG3503">
    <property type="taxonomic scope" value="Eukaryota"/>
</dbReference>
<dbReference type="HOGENOM" id="CLU_184680_1_0_1"/>
<dbReference type="InParanoid" id="Q9P7M5"/>
<dbReference type="OMA" id="MYVLDKD"/>
<dbReference type="PhylomeDB" id="Q9P7M5"/>
<dbReference type="PRO" id="PR:Q9P7M5"/>
<dbReference type="Proteomes" id="UP000002485">
    <property type="component" value="Chromosome I"/>
</dbReference>
<dbReference type="GO" id="GO:0031429">
    <property type="term" value="C:box H/ACA snoRNP complex"/>
    <property type="evidence" value="ECO:0000318"/>
    <property type="project" value="GO_Central"/>
</dbReference>
<dbReference type="GO" id="GO:0005730">
    <property type="term" value="C:nucleolus"/>
    <property type="evidence" value="ECO:0007005"/>
    <property type="project" value="PomBase"/>
</dbReference>
<dbReference type="GO" id="GO:0034513">
    <property type="term" value="F:box H/ACA snoRNA binding"/>
    <property type="evidence" value="ECO:0000266"/>
    <property type="project" value="PomBase"/>
</dbReference>
<dbReference type="GO" id="GO:0019843">
    <property type="term" value="F:rRNA binding"/>
    <property type="evidence" value="ECO:0000305"/>
    <property type="project" value="PomBase"/>
</dbReference>
<dbReference type="GO" id="GO:0070034">
    <property type="term" value="F:telomerase RNA binding"/>
    <property type="evidence" value="ECO:0000318"/>
    <property type="project" value="GO_Central"/>
</dbReference>
<dbReference type="GO" id="GO:0031118">
    <property type="term" value="P:rRNA pseudouridine synthesis"/>
    <property type="evidence" value="ECO:0000318"/>
    <property type="project" value="GO_Central"/>
</dbReference>
<dbReference type="GO" id="GO:0031120">
    <property type="term" value="P:snRNA pseudouridine synthesis"/>
    <property type="evidence" value="ECO:0000318"/>
    <property type="project" value="GO_Central"/>
</dbReference>
<dbReference type="FunFam" id="4.10.80.300:FF:000001">
    <property type="entry name" value="H/ACA ribonucleoprotein complex subunit 3"/>
    <property type="match status" value="1"/>
</dbReference>
<dbReference type="Gene3D" id="4.10.80.300">
    <property type="match status" value="1"/>
</dbReference>
<dbReference type="InterPro" id="IPR007264">
    <property type="entry name" value="H/ACA_rnp_Nop10"/>
</dbReference>
<dbReference type="InterPro" id="IPR036756">
    <property type="entry name" value="H/ACA_rnp_Nop10_sf"/>
</dbReference>
<dbReference type="PANTHER" id="PTHR13305:SF0">
    <property type="entry name" value="H_ACA RIBONUCLEOPROTEIN COMPLEX SUBUNIT 3"/>
    <property type="match status" value="1"/>
</dbReference>
<dbReference type="PANTHER" id="PTHR13305">
    <property type="entry name" value="RIBOSOME BIOGENESIS PROTEIN NOP10"/>
    <property type="match status" value="1"/>
</dbReference>
<dbReference type="Pfam" id="PF04135">
    <property type="entry name" value="Nop10p"/>
    <property type="match status" value="1"/>
</dbReference>
<dbReference type="SUPFAM" id="SSF144210">
    <property type="entry name" value="Nop10-like SnoRNP"/>
    <property type="match status" value="1"/>
</dbReference>
<proteinExistence type="inferred from homology"/>
<evidence type="ECO:0000250" key="1">
    <source>
        <dbReference type="UniProtKB" id="Q6Q547"/>
    </source>
</evidence>
<evidence type="ECO:0000305" key="2"/>
<organism>
    <name type="scientific">Schizosaccharomyces pombe (strain 972 / ATCC 24843)</name>
    <name type="common">Fission yeast</name>
    <dbReference type="NCBI Taxonomy" id="284812"/>
    <lineage>
        <taxon>Eukaryota</taxon>
        <taxon>Fungi</taxon>
        <taxon>Dikarya</taxon>
        <taxon>Ascomycota</taxon>
        <taxon>Taphrinomycotina</taxon>
        <taxon>Schizosaccharomycetes</taxon>
        <taxon>Schizosaccharomycetales</taxon>
        <taxon>Schizosaccharomycetaceae</taxon>
        <taxon>Schizosaccharomyces</taxon>
    </lineage>
</organism>
<name>NOP10_SCHPO</name>
<reference key="1">
    <citation type="journal article" date="2002" name="Nature">
        <title>The genome sequence of Schizosaccharomyces pombe.</title>
        <authorList>
            <person name="Wood V."/>
            <person name="Gwilliam R."/>
            <person name="Rajandream M.A."/>
            <person name="Lyne M.H."/>
            <person name="Lyne R."/>
            <person name="Stewart A."/>
            <person name="Sgouros J.G."/>
            <person name="Peat N."/>
            <person name="Hayles J."/>
            <person name="Baker S.G."/>
            <person name="Basham D."/>
            <person name="Bowman S."/>
            <person name="Brooks K."/>
            <person name="Brown D."/>
            <person name="Brown S."/>
            <person name="Chillingworth T."/>
            <person name="Churcher C.M."/>
            <person name="Collins M."/>
            <person name="Connor R."/>
            <person name="Cronin A."/>
            <person name="Davis P."/>
            <person name="Feltwell T."/>
            <person name="Fraser A."/>
            <person name="Gentles S."/>
            <person name="Goble A."/>
            <person name="Hamlin N."/>
            <person name="Harris D.E."/>
            <person name="Hidalgo J."/>
            <person name="Hodgson G."/>
            <person name="Holroyd S."/>
            <person name="Hornsby T."/>
            <person name="Howarth S."/>
            <person name="Huckle E.J."/>
            <person name="Hunt S."/>
            <person name="Jagels K."/>
            <person name="James K.D."/>
            <person name="Jones L."/>
            <person name="Jones M."/>
            <person name="Leather S."/>
            <person name="McDonald S."/>
            <person name="McLean J."/>
            <person name="Mooney P."/>
            <person name="Moule S."/>
            <person name="Mungall K.L."/>
            <person name="Murphy L.D."/>
            <person name="Niblett D."/>
            <person name="Odell C."/>
            <person name="Oliver K."/>
            <person name="O'Neil S."/>
            <person name="Pearson D."/>
            <person name="Quail M.A."/>
            <person name="Rabbinowitsch E."/>
            <person name="Rutherford K.M."/>
            <person name="Rutter S."/>
            <person name="Saunders D."/>
            <person name="Seeger K."/>
            <person name="Sharp S."/>
            <person name="Skelton J."/>
            <person name="Simmonds M.N."/>
            <person name="Squares R."/>
            <person name="Squares S."/>
            <person name="Stevens K."/>
            <person name="Taylor K."/>
            <person name="Taylor R.G."/>
            <person name="Tivey A."/>
            <person name="Walsh S.V."/>
            <person name="Warren T."/>
            <person name="Whitehead S."/>
            <person name="Woodward J.R."/>
            <person name="Volckaert G."/>
            <person name="Aert R."/>
            <person name="Robben J."/>
            <person name="Grymonprez B."/>
            <person name="Weltjens I."/>
            <person name="Vanstreels E."/>
            <person name="Rieger M."/>
            <person name="Schaefer M."/>
            <person name="Mueller-Auer S."/>
            <person name="Gabel C."/>
            <person name="Fuchs M."/>
            <person name="Duesterhoeft A."/>
            <person name="Fritzc C."/>
            <person name="Holzer E."/>
            <person name="Moestl D."/>
            <person name="Hilbert H."/>
            <person name="Borzym K."/>
            <person name="Langer I."/>
            <person name="Beck A."/>
            <person name="Lehrach H."/>
            <person name="Reinhardt R."/>
            <person name="Pohl T.M."/>
            <person name="Eger P."/>
            <person name="Zimmermann W."/>
            <person name="Wedler H."/>
            <person name="Wambutt R."/>
            <person name="Purnelle B."/>
            <person name="Goffeau A."/>
            <person name="Cadieu E."/>
            <person name="Dreano S."/>
            <person name="Gloux S."/>
            <person name="Lelaure V."/>
            <person name="Mottier S."/>
            <person name="Galibert F."/>
            <person name="Aves S.J."/>
            <person name="Xiang Z."/>
            <person name="Hunt C."/>
            <person name="Moore K."/>
            <person name="Hurst S.M."/>
            <person name="Lucas M."/>
            <person name="Rochet M."/>
            <person name="Gaillardin C."/>
            <person name="Tallada V.A."/>
            <person name="Garzon A."/>
            <person name="Thode G."/>
            <person name="Daga R.R."/>
            <person name="Cruzado L."/>
            <person name="Jimenez J."/>
            <person name="Sanchez M."/>
            <person name="del Rey F."/>
            <person name="Benito J."/>
            <person name="Dominguez A."/>
            <person name="Revuelta J.L."/>
            <person name="Moreno S."/>
            <person name="Armstrong J."/>
            <person name="Forsburg S.L."/>
            <person name="Cerutti L."/>
            <person name="Lowe T."/>
            <person name="McCombie W.R."/>
            <person name="Paulsen I."/>
            <person name="Potashkin J."/>
            <person name="Shpakovski G.V."/>
            <person name="Ussery D."/>
            <person name="Barrell B.G."/>
            <person name="Nurse P."/>
        </authorList>
    </citation>
    <scope>NUCLEOTIDE SEQUENCE [LARGE SCALE GENOMIC DNA]</scope>
    <source>
        <strain>972 / ATCC 24843</strain>
    </source>
</reference>
<gene>
    <name type="primary">nop10</name>
    <name type="ORF">SPAP27G11.13c</name>
</gene>